<evidence type="ECO:0000256" key="1">
    <source>
        <dbReference type="SAM" id="MobiDB-lite"/>
    </source>
</evidence>
<evidence type="ECO:0000305" key="2"/>
<dbReference type="EMBL" id="AAFI02000131">
    <property type="protein sequence ID" value="EAL62830.1"/>
    <property type="molecule type" value="Genomic_DNA"/>
</dbReference>
<dbReference type="RefSeq" id="XP_636330.1">
    <property type="nucleotide sequence ID" value="XM_631238.1"/>
</dbReference>
<dbReference type="SMR" id="Q54HV9"/>
<dbReference type="STRING" id="44689.Q54HV9"/>
<dbReference type="PaxDb" id="44689-DDB0220642"/>
<dbReference type="EnsemblProtists" id="EAL62830">
    <property type="protein sequence ID" value="EAL62830"/>
    <property type="gene ID" value="DDB_G0289193"/>
</dbReference>
<dbReference type="GeneID" id="8627003"/>
<dbReference type="KEGG" id="ddi:DDB_G0289193"/>
<dbReference type="dictyBase" id="DDB_G0289193">
    <property type="gene designation" value="H2Av2"/>
</dbReference>
<dbReference type="VEuPathDB" id="AmoebaDB:DDB_G0289193"/>
<dbReference type="eggNOG" id="KOG1756">
    <property type="taxonomic scope" value="Eukaryota"/>
</dbReference>
<dbReference type="HOGENOM" id="CLU_974633_0_0_1"/>
<dbReference type="InParanoid" id="Q54HV9"/>
<dbReference type="Reactome" id="R-DDI-2299718">
    <property type="pathway name" value="Condensation of Prophase Chromosomes"/>
</dbReference>
<dbReference type="Reactome" id="R-DDI-2559580">
    <property type="pathway name" value="Oxidative Stress Induced Senescence"/>
</dbReference>
<dbReference type="Reactome" id="R-DDI-3214815">
    <property type="pathway name" value="HDACs deacetylate histones"/>
</dbReference>
<dbReference type="Reactome" id="R-DDI-3214858">
    <property type="pathway name" value="RMTs methylate histone arginines"/>
</dbReference>
<dbReference type="Reactome" id="R-DDI-427359">
    <property type="pathway name" value="SIRT1 negatively regulates rRNA expression"/>
</dbReference>
<dbReference type="Reactome" id="R-DDI-5625886">
    <property type="pathway name" value="Activated PKN1 stimulates transcription of AR (androgen receptor) regulated genes KLK2 and KLK3"/>
</dbReference>
<dbReference type="Reactome" id="R-DDI-5689880">
    <property type="pathway name" value="Ub-specific processing proteases"/>
</dbReference>
<dbReference type="Reactome" id="R-DDI-5689901">
    <property type="pathway name" value="Metalloprotease DUBs"/>
</dbReference>
<dbReference type="Reactome" id="R-DDI-5693565">
    <property type="pathway name" value="Recruitment and ATM-mediated phosphorylation of repair and signaling proteins at DNA double strand breaks"/>
</dbReference>
<dbReference type="Reactome" id="R-DDI-68616">
    <property type="pathway name" value="Assembly of the ORC complex at the origin of replication"/>
</dbReference>
<dbReference type="Reactome" id="R-DDI-73772">
    <property type="pathway name" value="RNA Polymerase I Promoter Escape"/>
</dbReference>
<dbReference type="Reactome" id="R-DDI-9843940">
    <property type="pathway name" value="Regulation of endogenous retroelements by KRAB-ZFP proteins"/>
</dbReference>
<dbReference type="PRO" id="PR:Q54HV9"/>
<dbReference type="Proteomes" id="UP000002195">
    <property type="component" value="Chromosome 5"/>
</dbReference>
<dbReference type="GO" id="GO:0000786">
    <property type="term" value="C:nucleosome"/>
    <property type="evidence" value="ECO:0000318"/>
    <property type="project" value="GO_Central"/>
</dbReference>
<dbReference type="GO" id="GO:0005634">
    <property type="term" value="C:nucleus"/>
    <property type="evidence" value="ECO:0000318"/>
    <property type="project" value="GO_Central"/>
</dbReference>
<dbReference type="GO" id="GO:0003677">
    <property type="term" value="F:DNA binding"/>
    <property type="evidence" value="ECO:0007669"/>
    <property type="project" value="InterPro"/>
</dbReference>
<dbReference type="GO" id="GO:0046982">
    <property type="term" value="F:protein heterodimerization activity"/>
    <property type="evidence" value="ECO:0007669"/>
    <property type="project" value="InterPro"/>
</dbReference>
<dbReference type="GO" id="GO:0030527">
    <property type="term" value="F:structural constituent of chromatin"/>
    <property type="evidence" value="ECO:0000318"/>
    <property type="project" value="GO_Central"/>
</dbReference>
<dbReference type="GO" id="GO:0031507">
    <property type="term" value="P:heterochromatin formation"/>
    <property type="evidence" value="ECO:0000318"/>
    <property type="project" value="GO_Central"/>
</dbReference>
<dbReference type="CDD" id="cd00074">
    <property type="entry name" value="HFD_H2A"/>
    <property type="match status" value="1"/>
</dbReference>
<dbReference type="FunFam" id="1.10.20.10:FF:000268">
    <property type="match status" value="1"/>
</dbReference>
<dbReference type="Gene3D" id="1.10.20.10">
    <property type="entry name" value="Histone, subunit A"/>
    <property type="match status" value="1"/>
</dbReference>
<dbReference type="InterPro" id="IPR009072">
    <property type="entry name" value="Histone-fold"/>
</dbReference>
<dbReference type="InterPro" id="IPR002119">
    <property type="entry name" value="Histone_H2A"/>
</dbReference>
<dbReference type="InterPro" id="IPR032454">
    <property type="entry name" value="Histone_H2A_C"/>
</dbReference>
<dbReference type="PANTHER" id="PTHR23430">
    <property type="entry name" value="HISTONE H2A"/>
    <property type="match status" value="1"/>
</dbReference>
<dbReference type="Pfam" id="PF16211">
    <property type="entry name" value="Histone_H2A_C"/>
    <property type="match status" value="1"/>
</dbReference>
<dbReference type="PRINTS" id="PR00620">
    <property type="entry name" value="HISTONEH2A"/>
</dbReference>
<dbReference type="SMART" id="SM00414">
    <property type="entry name" value="H2A"/>
    <property type="match status" value="1"/>
</dbReference>
<dbReference type="SUPFAM" id="SSF47113">
    <property type="entry name" value="Histone-fold"/>
    <property type="match status" value="1"/>
</dbReference>
<keyword id="KW-1185">Reference proteome</keyword>
<proteinExistence type="inferred from homology"/>
<accession>Q54HV9</accession>
<feature type="chain" id="PRO_0000389156" description="Histone H2A.v2">
    <location>
        <begin position="1"/>
        <end position="286"/>
    </location>
</feature>
<feature type="region of interest" description="Disordered" evidence="1">
    <location>
        <begin position="1"/>
        <end position="180"/>
    </location>
</feature>
<feature type="compositionally biased region" description="Polar residues" evidence="1">
    <location>
        <begin position="1"/>
        <end position="26"/>
    </location>
</feature>
<feature type="compositionally biased region" description="Low complexity" evidence="1">
    <location>
        <begin position="44"/>
        <end position="59"/>
    </location>
</feature>
<feature type="compositionally biased region" description="Low complexity" evidence="1">
    <location>
        <begin position="76"/>
        <end position="104"/>
    </location>
</feature>
<feature type="compositionally biased region" description="Low complexity" evidence="1">
    <location>
        <begin position="115"/>
        <end position="138"/>
    </location>
</feature>
<comment type="similarity">
    <text evidence="2">Belongs to the histone H2A family.</text>
</comment>
<comment type="caution">
    <text evidence="2">In contrast to other members of the histone H2A family, this protein is much longer and has a highly divergent N-terminus. It is therefore unclear whether it is a real histone.</text>
</comment>
<sequence length="286" mass="31051">MKSNGHPSNNSINEPIKQQETKQNNKSSHKTPHKPPYLARAKFQPKTSSFSNSSFQSSTPPKPQIALKSPSPSPSQPKTSSSSYSSLSSPSPSQPKTSSPSLPSSTPPKPRQIALKSPSSSSSSQPKTSSSSYSSLPSSTPPKPQHIELKSPSTVKKSPIVKKTNSPKGSKFKKTIRSSRSTRAGLTISVSRVEKLLRGRRYSKRVSPTSCVFLAAVLEYMVLELLELSLNELSLSKKSRRIKNRHINLSILKDVELSALLNDVIICSGGVLSSIHPSLLKLKKDQ</sequence>
<name>H2AV2_DICDI</name>
<organism>
    <name type="scientific">Dictyostelium discoideum</name>
    <name type="common">Social amoeba</name>
    <dbReference type="NCBI Taxonomy" id="44689"/>
    <lineage>
        <taxon>Eukaryota</taxon>
        <taxon>Amoebozoa</taxon>
        <taxon>Evosea</taxon>
        <taxon>Eumycetozoa</taxon>
        <taxon>Dictyostelia</taxon>
        <taxon>Dictyosteliales</taxon>
        <taxon>Dictyosteliaceae</taxon>
        <taxon>Dictyostelium</taxon>
    </lineage>
</organism>
<reference key="1">
    <citation type="journal article" date="2005" name="Nature">
        <title>The genome of the social amoeba Dictyostelium discoideum.</title>
        <authorList>
            <person name="Eichinger L."/>
            <person name="Pachebat J.A."/>
            <person name="Gloeckner G."/>
            <person name="Rajandream M.A."/>
            <person name="Sucgang R."/>
            <person name="Berriman M."/>
            <person name="Song J."/>
            <person name="Olsen R."/>
            <person name="Szafranski K."/>
            <person name="Xu Q."/>
            <person name="Tunggal B."/>
            <person name="Kummerfeld S."/>
            <person name="Madera M."/>
            <person name="Konfortov B.A."/>
            <person name="Rivero F."/>
            <person name="Bankier A.T."/>
            <person name="Lehmann R."/>
            <person name="Hamlin N."/>
            <person name="Davies R."/>
            <person name="Gaudet P."/>
            <person name="Fey P."/>
            <person name="Pilcher K."/>
            <person name="Chen G."/>
            <person name="Saunders D."/>
            <person name="Sodergren E.J."/>
            <person name="Davis P."/>
            <person name="Kerhornou A."/>
            <person name="Nie X."/>
            <person name="Hall N."/>
            <person name="Anjard C."/>
            <person name="Hemphill L."/>
            <person name="Bason N."/>
            <person name="Farbrother P."/>
            <person name="Desany B."/>
            <person name="Just E."/>
            <person name="Morio T."/>
            <person name="Rost R."/>
            <person name="Churcher C.M."/>
            <person name="Cooper J."/>
            <person name="Haydock S."/>
            <person name="van Driessche N."/>
            <person name="Cronin A."/>
            <person name="Goodhead I."/>
            <person name="Muzny D.M."/>
            <person name="Mourier T."/>
            <person name="Pain A."/>
            <person name="Lu M."/>
            <person name="Harper D."/>
            <person name="Lindsay R."/>
            <person name="Hauser H."/>
            <person name="James K.D."/>
            <person name="Quiles M."/>
            <person name="Madan Babu M."/>
            <person name="Saito T."/>
            <person name="Buchrieser C."/>
            <person name="Wardroper A."/>
            <person name="Felder M."/>
            <person name="Thangavelu M."/>
            <person name="Johnson D."/>
            <person name="Knights A."/>
            <person name="Loulseged H."/>
            <person name="Mungall K.L."/>
            <person name="Oliver K."/>
            <person name="Price C."/>
            <person name="Quail M.A."/>
            <person name="Urushihara H."/>
            <person name="Hernandez J."/>
            <person name="Rabbinowitsch E."/>
            <person name="Steffen D."/>
            <person name="Sanders M."/>
            <person name="Ma J."/>
            <person name="Kohara Y."/>
            <person name="Sharp S."/>
            <person name="Simmonds M.N."/>
            <person name="Spiegler S."/>
            <person name="Tivey A."/>
            <person name="Sugano S."/>
            <person name="White B."/>
            <person name="Walker D."/>
            <person name="Woodward J.R."/>
            <person name="Winckler T."/>
            <person name="Tanaka Y."/>
            <person name="Shaulsky G."/>
            <person name="Schleicher M."/>
            <person name="Weinstock G.M."/>
            <person name="Rosenthal A."/>
            <person name="Cox E.C."/>
            <person name="Chisholm R.L."/>
            <person name="Gibbs R.A."/>
            <person name="Loomis W.F."/>
            <person name="Platzer M."/>
            <person name="Kay R.R."/>
            <person name="Williams J.G."/>
            <person name="Dear P.H."/>
            <person name="Noegel A.A."/>
            <person name="Barrell B.G."/>
            <person name="Kuspa A."/>
        </authorList>
    </citation>
    <scope>NUCLEOTIDE SEQUENCE [LARGE SCALE GENOMIC DNA]</scope>
    <source>
        <strain>AX4</strain>
    </source>
</reference>
<gene>
    <name type="primary">H2Av2</name>
    <name type="ORF">DDB_G0289193</name>
</gene>
<protein>
    <recommendedName>
        <fullName>Histone H2A.v2</fullName>
    </recommendedName>
</protein>